<name>USE1_DROME</name>
<feature type="chain" id="PRO_0000215582" description="Vesicle transport protein USE1">
    <location>
        <begin position="1"/>
        <end position="250"/>
    </location>
</feature>
<feature type="topological domain" description="Cytoplasmic" evidence="2">
    <location>
        <begin position="1"/>
        <end position="221"/>
    </location>
</feature>
<feature type="transmembrane region" description="Helical; Anchor for type IV membrane protein" evidence="2">
    <location>
        <begin position="222"/>
        <end position="242"/>
    </location>
</feature>
<feature type="topological domain" description="Lumenal" evidence="2">
    <location>
        <begin position="243"/>
        <end position="250"/>
    </location>
</feature>
<feature type="region of interest" description="Disordered" evidence="3">
    <location>
        <begin position="72"/>
        <end position="92"/>
    </location>
</feature>
<feature type="region of interest" description="Disordered" evidence="3">
    <location>
        <begin position="117"/>
        <end position="147"/>
    </location>
</feature>
<feature type="coiled-coil region" evidence="2">
    <location>
        <begin position="197"/>
        <end position="221"/>
    </location>
</feature>
<feature type="compositionally biased region" description="Polar residues" evidence="3">
    <location>
        <begin position="76"/>
        <end position="92"/>
    </location>
</feature>
<feature type="compositionally biased region" description="Polar residues" evidence="3">
    <location>
        <begin position="138"/>
        <end position="147"/>
    </location>
</feature>
<feature type="splice variant" id="VSP_012668" description="In isoform 2." evidence="5">
    <location>
        <begin position="1"/>
        <end position="38"/>
    </location>
</feature>
<feature type="sequence conflict" description="In Ref. 3; AAR96209." evidence="6" ref="3">
    <original>V</original>
    <variation>A</variation>
    <location>
        <position position="52"/>
    </location>
</feature>
<feature type="sequence conflict" description="In Ref. 3; AAR96209." evidence="6" ref="3">
    <original>I</original>
    <variation>M</variation>
    <location>
        <position position="99"/>
    </location>
</feature>
<feature type="sequence conflict" description="In Ref. 3; AAR96209." evidence="6" ref="3">
    <original>Q</original>
    <variation>H</variation>
    <location>
        <position position="117"/>
    </location>
</feature>
<evidence type="ECO:0000250" key="1"/>
<evidence type="ECO:0000255" key="2"/>
<evidence type="ECO:0000256" key="3">
    <source>
        <dbReference type="SAM" id="MobiDB-lite"/>
    </source>
</evidence>
<evidence type="ECO:0000269" key="4">
    <source>
    </source>
</evidence>
<evidence type="ECO:0000303" key="5">
    <source ref="3"/>
</evidence>
<evidence type="ECO:0000305" key="6"/>
<accession>Q9VSU7</accession>
<accession>Q6NN76</accession>
<dbReference type="EMBL" id="AE014296">
    <property type="protein sequence ID" value="AAF50314.3"/>
    <property type="molecule type" value="Genomic_DNA"/>
</dbReference>
<dbReference type="EMBL" id="BT011417">
    <property type="protein sequence ID" value="AAR96209.1"/>
    <property type="molecule type" value="mRNA"/>
</dbReference>
<dbReference type="RefSeq" id="NP_648289.2">
    <molecule id="Q9VSU7-1"/>
    <property type="nucleotide sequence ID" value="NM_140032.3"/>
</dbReference>
<dbReference type="SMR" id="Q9VSU7"/>
<dbReference type="BioGRID" id="64451">
    <property type="interactions" value="26"/>
</dbReference>
<dbReference type="FunCoup" id="Q9VSU7">
    <property type="interactions" value="1843"/>
</dbReference>
<dbReference type="IntAct" id="Q9VSU7">
    <property type="interactions" value="22"/>
</dbReference>
<dbReference type="STRING" id="7227.FBpp0076264"/>
<dbReference type="SwissPalm" id="Q9VSU7"/>
<dbReference type="PaxDb" id="7227-FBpp0076264"/>
<dbReference type="EnsemblMetazoa" id="FBtr0076537">
    <molecule id="Q9VSU7-1"/>
    <property type="protein sequence ID" value="FBpp0076264"/>
    <property type="gene ID" value="FBgn0035965"/>
</dbReference>
<dbReference type="GeneID" id="39051"/>
<dbReference type="KEGG" id="dme:Dmel_CG14181"/>
<dbReference type="UCSC" id="CG14181-RA">
    <molecule id="Q9VSU7-1"/>
    <property type="organism name" value="d. melanogaster"/>
</dbReference>
<dbReference type="AGR" id="FB:FBgn0035965"/>
<dbReference type="CTD" id="55850"/>
<dbReference type="FlyBase" id="FBgn0035965">
    <property type="gene designation" value="Use1"/>
</dbReference>
<dbReference type="VEuPathDB" id="VectorBase:FBgn0035965"/>
<dbReference type="eggNOG" id="KOG2678">
    <property type="taxonomic scope" value="Eukaryota"/>
</dbReference>
<dbReference type="GeneTree" id="ENSGT00390000014361"/>
<dbReference type="HOGENOM" id="CLU_087320_0_0_1"/>
<dbReference type="InParanoid" id="Q9VSU7"/>
<dbReference type="OMA" id="KYYTNAQ"/>
<dbReference type="OrthoDB" id="4506189at2759"/>
<dbReference type="PhylomeDB" id="Q9VSU7"/>
<dbReference type="Reactome" id="R-DME-6811434">
    <property type="pathway name" value="COPI-dependent Golgi-to-ER retrograde traffic"/>
</dbReference>
<dbReference type="BioGRID-ORCS" id="39051">
    <property type="hits" value="0 hits in 1 CRISPR screen"/>
</dbReference>
<dbReference type="ChiTaRS" id="Use1">
    <property type="organism name" value="fly"/>
</dbReference>
<dbReference type="GenomeRNAi" id="39051"/>
<dbReference type="PRO" id="PR:Q9VSU7"/>
<dbReference type="Proteomes" id="UP000000803">
    <property type="component" value="Chromosome 3L"/>
</dbReference>
<dbReference type="Bgee" id="FBgn0035965">
    <property type="expression patterns" value="Expressed in spermatid in male reproductive gland and 90 other cell types or tissues"/>
</dbReference>
<dbReference type="GO" id="GO:0098554">
    <property type="term" value="C:cytoplasmic side of endoplasmic reticulum membrane"/>
    <property type="evidence" value="ECO:0000250"/>
    <property type="project" value="FlyBase"/>
</dbReference>
<dbReference type="GO" id="GO:0012505">
    <property type="term" value="C:endomembrane system"/>
    <property type="evidence" value="ECO:0007005"/>
    <property type="project" value="FlyBase"/>
</dbReference>
<dbReference type="GO" id="GO:0005783">
    <property type="term" value="C:endoplasmic reticulum"/>
    <property type="evidence" value="ECO:0000314"/>
    <property type="project" value="FlyBase"/>
</dbReference>
<dbReference type="GO" id="GO:0031201">
    <property type="term" value="C:SNARE complex"/>
    <property type="evidence" value="ECO:0000250"/>
    <property type="project" value="FlyBase"/>
</dbReference>
<dbReference type="GO" id="GO:0005484">
    <property type="term" value="F:SNAP receptor activity"/>
    <property type="evidence" value="ECO:0000250"/>
    <property type="project" value="UniProtKB"/>
</dbReference>
<dbReference type="GO" id="GO:0007030">
    <property type="term" value="P:Golgi organization"/>
    <property type="evidence" value="ECO:0000315"/>
    <property type="project" value="FlyBase"/>
</dbReference>
<dbReference type="GO" id="GO:0009306">
    <property type="term" value="P:protein secretion"/>
    <property type="evidence" value="ECO:0000315"/>
    <property type="project" value="FlyBase"/>
</dbReference>
<dbReference type="GO" id="GO:0006890">
    <property type="term" value="P:retrograde vesicle-mediated transport, Golgi to endoplasmic reticulum"/>
    <property type="evidence" value="ECO:0000250"/>
    <property type="project" value="UniProtKB"/>
</dbReference>
<dbReference type="CDD" id="cd15860">
    <property type="entry name" value="SNARE_USE1"/>
    <property type="match status" value="1"/>
</dbReference>
<dbReference type="InterPro" id="IPR019150">
    <property type="entry name" value="Vesicle_transport_protein_Use1"/>
</dbReference>
<dbReference type="PANTHER" id="PTHR13050">
    <property type="entry name" value="USE1-LIKE PROTEIN"/>
    <property type="match status" value="1"/>
</dbReference>
<dbReference type="PANTHER" id="PTHR13050:SF7">
    <property type="entry name" value="VESICLE TRANSPORT PROTEIN USE1"/>
    <property type="match status" value="1"/>
</dbReference>
<dbReference type="Pfam" id="PF09753">
    <property type="entry name" value="Use1"/>
    <property type="match status" value="1"/>
</dbReference>
<keyword id="KW-0025">Alternative splicing</keyword>
<keyword id="KW-0175">Coiled coil</keyword>
<keyword id="KW-0256">Endoplasmic reticulum</keyword>
<keyword id="KW-0931">ER-Golgi transport</keyword>
<keyword id="KW-0472">Membrane</keyword>
<keyword id="KW-0653">Protein transport</keyword>
<keyword id="KW-1185">Reference proteome</keyword>
<keyword id="KW-0812">Transmembrane</keyword>
<keyword id="KW-1133">Transmembrane helix</keyword>
<keyword id="KW-0813">Transport</keyword>
<organism>
    <name type="scientific">Drosophila melanogaster</name>
    <name type="common">Fruit fly</name>
    <dbReference type="NCBI Taxonomy" id="7227"/>
    <lineage>
        <taxon>Eukaryota</taxon>
        <taxon>Metazoa</taxon>
        <taxon>Ecdysozoa</taxon>
        <taxon>Arthropoda</taxon>
        <taxon>Hexapoda</taxon>
        <taxon>Insecta</taxon>
        <taxon>Pterygota</taxon>
        <taxon>Neoptera</taxon>
        <taxon>Endopterygota</taxon>
        <taxon>Diptera</taxon>
        <taxon>Brachycera</taxon>
        <taxon>Muscomorpha</taxon>
        <taxon>Ephydroidea</taxon>
        <taxon>Drosophilidae</taxon>
        <taxon>Drosophila</taxon>
        <taxon>Sophophora</taxon>
    </lineage>
</organism>
<protein>
    <recommendedName>
        <fullName>Vesicle transport protein USE1</fullName>
    </recommendedName>
    <alternativeName>
        <fullName>USE1-like protein</fullName>
    </alternativeName>
</protein>
<gene>
    <name type="primary">Use1</name>
    <name type="ORF">CG14181</name>
</gene>
<reference key="1">
    <citation type="journal article" date="2000" name="Science">
        <title>The genome sequence of Drosophila melanogaster.</title>
        <authorList>
            <person name="Adams M.D."/>
            <person name="Celniker S.E."/>
            <person name="Holt R.A."/>
            <person name="Evans C.A."/>
            <person name="Gocayne J.D."/>
            <person name="Amanatides P.G."/>
            <person name="Scherer S.E."/>
            <person name="Li P.W."/>
            <person name="Hoskins R.A."/>
            <person name="Galle R.F."/>
            <person name="George R.A."/>
            <person name="Lewis S.E."/>
            <person name="Richards S."/>
            <person name="Ashburner M."/>
            <person name="Henderson S.N."/>
            <person name="Sutton G.G."/>
            <person name="Wortman J.R."/>
            <person name="Yandell M.D."/>
            <person name="Zhang Q."/>
            <person name="Chen L.X."/>
            <person name="Brandon R.C."/>
            <person name="Rogers Y.-H.C."/>
            <person name="Blazej R.G."/>
            <person name="Champe M."/>
            <person name="Pfeiffer B.D."/>
            <person name="Wan K.H."/>
            <person name="Doyle C."/>
            <person name="Baxter E.G."/>
            <person name="Helt G."/>
            <person name="Nelson C.R."/>
            <person name="Miklos G.L.G."/>
            <person name="Abril J.F."/>
            <person name="Agbayani A."/>
            <person name="An H.-J."/>
            <person name="Andrews-Pfannkoch C."/>
            <person name="Baldwin D."/>
            <person name="Ballew R.M."/>
            <person name="Basu A."/>
            <person name="Baxendale J."/>
            <person name="Bayraktaroglu L."/>
            <person name="Beasley E.M."/>
            <person name="Beeson K.Y."/>
            <person name="Benos P.V."/>
            <person name="Berman B.P."/>
            <person name="Bhandari D."/>
            <person name="Bolshakov S."/>
            <person name="Borkova D."/>
            <person name="Botchan M.R."/>
            <person name="Bouck J."/>
            <person name="Brokstein P."/>
            <person name="Brottier P."/>
            <person name="Burtis K.C."/>
            <person name="Busam D.A."/>
            <person name="Butler H."/>
            <person name="Cadieu E."/>
            <person name="Center A."/>
            <person name="Chandra I."/>
            <person name="Cherry J.M."/>
            <person name="Cawley S."/>
            <person name="Dahlke C."/>
            <person name="Davenport L.B."/>
            <person name="Davies P."/>
            <person name="de Pablos B."/>
            <person name="Delcher A."/>
            <person name="Deng Z."/>
            <person name="Mays A.D."/>
            <person name="Dew I."/>
            <person name="Dietz S.M."/>
            <person name="Dodson K."/>
            <person name="Doup L.E."/>
            <person name="Downes M."/>
            <person name="Dugan-Rocha S."/>
            <person name="Dunkov B.C."/>
            <person name="Dunn P."/>
            <person name="Durbin K.J."/>
            <person name="Evangelista C.C."/>
            <person name="Ferraz C."/>
            <person name="Ferriera S."/>
            <person name="Fleischmann W."/>
            <person name="Fosler C."/>
            <person name="Gabrielian A.E."/>
            <person name="Garg N.S."/>
            <person name="Gelbart W.M."/>
            <person name="Glasser K."/>
            <person name="Glodek A."/>
            <person name="Gong F."/>
            <person name="Gorrell J.H."/>
            <person name="Gu Z."/>
            <person name="Guan P."/>
            <person name="Harris M."/>
            <person name="Harris N.L."/>
            <person name="Harvey D.A."/>
            <person name="Heiman T.J."/>
            <person name="Hernandez J.R."/>
            <person name="Houck J."/>
            <person name="Hostin D."/>
            <person name="Houston K.A."/>
            <person name="Howland T.J."/>
            <person name="Wei M.-H."/>
            <person name="Ibegwam C."/>
            <person name="Jalali M."/>
            <person name="Kalush F."/>
            <person name="Karpen G.H."/>
            <person name="Ke Z."/>
            <person name="Kennison J.A."/>
            <person name="Ketchum K.A."/>
            <person name="Kimmel B.E."/>
            <person name="Kodira C.D."/>
            <person name="Kraft C.L."/>
            <person name="Kravitz S."/>
            <person name="Kulp D."/>
            <person name="Lai Z."/>
            <person name="Lasko P."/>
            <person name="Lei Y."/>
            <person name="Levitsky A.A."/>
            <person name="Li J.H."/>
            <person name="Li Z."/>
            <person name="Liang Y."/>
            <person name="Lin X."/>
            <person name="Liu X."/>
            <person name="Mattei B."/>
            <person name="McIntosh T.C."/>
            <person name="McLeod M.P."/>
            <person name="McPherson D."/>
            <person name="Merkulov G."/>
            <person name="Milshina N.V."/>
            <person name="Mobarry C."/>
            <person name="Morris J."/>
            <person name="Moshrefi A."/>
            <person name="Mount S.M."/>
            <person name="Moy M."/>
            <person name="Murphy B."/>
            <person name="Murphy L."/>
            <person name="Muzny D.M."/>
            <person name="Nelson D.L."/>
            <person name="Nelson D.R."/>
            <person name="Nelson K.A."/>
            <person name="Nixon K."/>
            <person name="Nusskern D.R."/>
            <person name="Pacleb J.M."/>
            <person name="Palazzolo M."/>
            <person name="Pittman G.S."/>
            <person name="Pan S."/>
            <person name="Pollard J."/>
            <person name="Puri V."/>
            <person name="Reese M.G."/>
            <person name="Reinert K."/>
            <person name="Remington K."/>
            <person name="Saunders R.D.C."/>
            <person name="Scheeler F."/>
            <person name="Shen H."/>
            <person name="Shue B.C."/>
            <person name="Siden-Kiamos I."/>
            <person name="Simpson M."/>
            <person name="Skupski M.P."/>
            <person name="Smith T.J."/>
            <person name="Spier E."/>
            <person name="Spradling A.C."/>
            <person name="Stapleton M."/>
            <person name="Strong R."/>
            <person name="Sun E."/>
            <person name="Svirskas R."/>
            <person name="Tector C."/>
            <person name="Turner R."/>
            <person name="Venter E."/>
            <person name="Wang A.H."/>
            <person name="Wang X."/>
            <person name="Wang Z.-Y."/>
            <person name="Wassarman D.A."/>
            <person name="Weinstock G.M."/>
            <person name="Weissenbach J."/>
            <person name="Williams S.M."/>
            <person name="Woodage T."/>
            <person name="Worley K.C."/>
            <person name="Wu D."/>
            <person name="Yang S."/>
            <person name="Yao Q.A."/>
            <person name="Ye J."/>
            <person name="Yeh R.-F."/>
            <person name="Zaveri J.S."/>
            <person name="Zhan M."/>
            <person name="Zhang G."/>
            <person name="Zhao Q."/>
            <person name="Zheng L."/>
            <person name="Zheng X.H."/>
            <person name="Zhong F.N."/>
            <person name="Zhong W."/>
            <person name="Zhou X."/>
            <person name="Zhu S.C."/>
            <person name="Zhu X."/>
            <person name="Smith H.O."/>
            <person name="Gibbs R.A."/>
            <person name="Myers E.W."/>
            <person name="Rubin G.M."/>
            <person name="Venter J.C."/>
        </authorList>
    </citation>
    <scope>NUCLEOTIDE SEQUENCE [LARGE SCALE GENOMIC DNA]</scope>
    <source>
        <strain>Berkeley</strain>
    </source>
</reference>
<reference key="2">
    <citation type="journal article" date="2002" name="Genome Biol.">
        <title>Annotation of the Drosophila melanogaster euchromatic genome: a systematic review.</title>
        <authorList>
            <person name="Misra S."/>
            <person name="Crosby M.A."/>
            <person name="Mungall C.J."/>
            <person name="Matthews B.B."/>
            <person name="Campbell K.S."/>
            <person name="Hradecky P."/>
            <person name="Huang Y."/>
            <person name="Kaminker J.S."/>
            <person name="Millburn G.H."/>
            <person name="Prochnik S.E."/>
            <person name="Smith C.D."/>
            <person name="Tupy J.L."/>
            <person name="Whitfield E.J."/>
            <person name="Bayraktaroglu L."/>
            <person name="Berman B.P."/>
            <person name="Bettencourt B.R."/>
            <person name="Celniker S.E."/>
            <person name="de Grey A.D.N.J."/>
            <person name="Drysdale R.A."/>
            <person name="Harris N.L."/>
            <person name="Richter J."/>
            <person name="Russo S."/>
            <person name="Schroeder A.J."/>
            <person name="Shu S.Q."/>
            <person name="Stapleton M."/>
            <person name="Yamada C."/>
            <person name="Ashburner M."/>
            <person name="Gelbart W.M."/>
            <person name="Rubin G.M."/>
            <person name="Lewis S.E."/>
        </authorList>
    </citation>
    <scope>GENOME REANNOTATION</scope>
    <source>
        <strain>Berkeley</strain>
    </source>
</reference>
<reference key="3">
    <citation type="submission" date="2004-01" db="EMBL/GenBank/DDBJ databases">
        <authorList>
            <person name="Stapleton M."/>
            <person name="Carlson J.W."/>
            <person name="Chavez C."/>
            <person name="Frise E."/>
            <person name="George R.A."/>
            <person name="Pacleb J.M."/>
            <person name="Park S."/>
            <person name="Wan K.H."/>
            <person name="Yu C."/>
            <person name="Rubin G.M."/>
            <person name="Celniker S.E."/>
        </authorList>
    </citation>
    <scope>NUCLEOTIDE SEQUENCE [LARGE SCALE MRNA] (ISOFORM 2)</scope>
    <source>
        <strain>Berkeley</strain>
        <tissue>Testis</tissue>
    </source>
</reference>
<reference key="4">
    <citation type="journal article" date="2006" name="Nature">
        <title>Functional genomics reveals genes involved in protein secretion and Golgi organization.</title>
        <authorList>
            <person name="Bard F."/>
            <person name="Casano L."/>
            <person name="Mallabiabarrena A."/>
            <person name="Wallace E."/>
            <person name="Saito K."/>
            <person name="Kitayama H."/>
            <person name="Guizzunti G."/>
            <person name="Hu Y."/>
            <person name="Wendler F."/>
            <person name="Dasgupta R."/>
            <person name="Perrimon N."/>
            <person name="Malhotra V."/>
        </authorList>
    </citation>
    <scope>FUNCTION</scope>
    <scope>SUBCELLULAR LOCATION</scope>
</reference>
<comment type="function">
    <text evidence="1 4">SNARE that may be involved in targeting and fusion of Golgi-derived retrograde transport vesicles with the ER (By similarity). Required for protein secretion.</text>
</comment>
<comment type="subcellular location">
    <subcellularLocation>
        <location evidence="4">Endoplasmic reticulum membrane</location>
        <topology evidence="4">Single-pass type IV membrane protein</topology>
    </subcellularLocation>
</comment>
<comment type="alternative products">
    <event type="alternative splicing"/>
    <isoform>
        <id>Q9VSU7-1</id>
        <name>1</name>
        <sequence type="displayed"/>
    </isoform>
    <isoform>
        <id>Q9VSU7-2</id>
        <name>2</name>
        <sequence type="described" ref="VSP_012668"/>
    </isoform>
</comment>
<comment type="similarity">
    <text evidence="6">Belongs to the USE1 family.</text>
</comment>
<proteinExistence type="evidence at transcript level"/>
<sequence>MATKLNVNIRTLLANCEELAKSEQNFWRLQKFIKSLDTMLAELEAMGDPQSVKRIPGYLERLQALKISTGYADVPGSTTKTPSQSSAVSETGENALKEIRQLQNSKYHNELRKELLQDSDALRRRRGADESSSSSGSANVQETSGENMNQAAKYYTNAQEKITEHMLSLTRNLKEQTETANRIIRRDTEVVSRSAGMADRNINSLGKEAEKLEQHSKKAYKCWLWLMIAFVIATFIGMVLFMKIMKKKKS</sequence>